<gene>
    <name evidence="1" type="primary">lgt</name>
    <name type="ordered locus">BURPS1106A_1030</name>
</gene>
<sequence>MIIHPNFDPVAIHLGPLAVRWYGLMYLVGFILAIVVGRLRLKLPHVAAQGWSAKDIDDMMFYGVLGVVLGGRLGYVLFYKAGYYFSHPLDIFRVWEGGMSFHGGFLGVTLAMALFAWQRKRHWLEVTDFVAPMVPTGLAAGRLGNFINGELWGRVTSPDAPWAMLFPGASRDDAAWLAAHQDIAAKWNLNEVFLSHQMLPRHPSQLYEIALEGIALFFVLWFFSRKPRPMGAISALFLIGYGAARFTVEFAREPDDFLGLLTFGLSMGQWLSLPMIVAGVLMMIWAYRRGGVAKQA</sequence>
<evidence type="ECO:0000255" key="1">
    <source>
        <dbReference type="HAMAP-Rule" id="MF_01147"/>
    </source>
</evidence>
<feature type="chain" id="PRO_1000053402" description="Phosphatidylglycerol--prolipoprotein diacylglyceryl transferase">
    <location>
        <begin position="1"/>
        <end position="296"/>
    </location>
</feature>
<feature type="transmembrane region" description="Helical" evidence="1">
    <location>
        <begin position="17"/>
        <end position="37"/>
    </location>
</feature>
<feature type="transmembrane region" description="Helical" evidence="1">
    <location>
        <begin position="59"/>
        <end position="79"/>
    </location>
</feature>
<feature type="transmembrane region" description="Helical" evidence="1">
    <location>
        <begin position="97"/>
        <end position="117"/>
    </location>
</feature>
<feature type="transmembrane region" description="Helical" evidence="1">
    <location>
        <begin position="230"/>
        <end position="250"/>
    </location>
</feature>
<feature type="transmembrane region" description="Helical" evidence="1">
    <location>
        <begin position="265"/>
        <end position="285"/>
    </location>
</feature>
<feature type="binding site" evidence="1">
    <location>
        <position position="142"/>
    </location>
    <ligand>
        <name>a 1,2-diacyl-sn-glycero-3-phospho-(1'-sn-glycerol)</name>
        <dbReference type="ChEBI" id="CHEBI:64716"/>
    </ligand>
</feature>
<dbReference type="EC" id="2.5.1.145" evidence="1"/>
<dbReference type="EMBL" id="CP000572">
    <property type="protein sequence ID" value="ABN90631.1"/>
    <property type="molecule type" value="Genomic_DNA"/>
</dbReference>
<dbReference type="RefSeq" id="WP_004191241.1">
    <property type="nucleotide sequence ID" value="NC_009076.1"/>
</dbReference>
<dbReference type="SMR" id="A3NSI9"/>
<dbReference type="GeneID" id="93059470"/>
<dbReference type="KEGG" id="bpl:BURPS1106A_1030"/>
<dbReference type="HOGENOM" id="CLU_013386_1_0_4"/>
<dbReference type="UniPathway" id="UPA00664"/>
<dbReference type="Proteomes" id="UP000006738">
    <property type="component" value="Chromosome I"/>
</dbReference>
<dbReference type="GO" id="GO:0005886">
    <property type="term" value="C:plasma membrane"/>
    <property type="evidence" value="ECO:0007669"/>
    <property type="project" value="UniProtKB-SubCell"/>
</dbReference>
<dbReference type="GO" id="GO:0008961">
    <property type="term" value="F:phosphatidylglycerol-prolipoprotein diacylglyceryl transferase activity"/>
    <property type="evidence" value="ECO:0007669"/>
    <property type="project" value="UniProtKB-UniRule"/>
</dbReference>
<dbReference type="GO" id="GO:0042158">
    <property type="term" value="P:lipoprotein biosynthetic process"/>
    <property type="evidence" value="ECO:0007669"/>
    <property type="project" value="UniProtKB-UniRule"/>
</dbReference>
<dbReference type="HAMAP" id="MF_01147">
    <property type="entry name" value="Lgt"/>
    <property type="match status" value="1"/>
</dbReference>
<dbReference type="InterPro" id="IPR001640">
    <property type="entry name" value="Lgt"/>
</dbReference>
<dbReference type="NCBIfam" id="TIGR00544">
    <property type="entry name" value="lgt"/>
    <property type="match status" value="1"/>
</dbReference>
<dbReference type="PANTHER" id="PTHR30589:SF0">
    <property type="entry name" value="PHOSPHATIDYLGLYCEROL--PROLIPOPROTEIN DIACYLGLYCERYL TRANSFERASE"/>
    <property type="match status" value="1"/>
</dbReference>
<dbReference type="PANTHER" id="PTHR30589">
    <property type="entry name" value="PROLIPOPROTEIN DIACYLGLYCERYL TRANSFERASE"/>
    <property type="match status" value="1"/>
</dbReference>
<dbReference type="Pfam" id="PF01790">
    <property type="entry name" value="LGT"/>
    <property type="match status" value="1"/>
</dbReference>
<dbReference type="PROSITE" id="PS01311">
    <property type="entry name" value="LGT"/>
    <property type="match status" value="1"/>
</dbReference>
<reference key="1">
    <citation type="journal article" date="2010" name="Genome Biol. Evol.">
        <title>Continuing evolution of Burkholderia mallei through genome reduction and large-scale rearrangements.</title>
        <authorList>
            <person name="Losada L."/>
            <person name="Ronning C.M."/>
            <person name="DeShazer D."/>
            <person name="Woods D."/>
            <person name="Fedorova N."/>
            <person name="Kim H.S."/>
            <person name="Shabalina S.A."/>
            <person name="Pearson T.R."/>
            <person name="Brinkac L."/>
            <person name="Tan P."/>
            <person name="Nandi T."/>
            <person name="Crabtree J."/>
            <person name="Badger J."/>
            <person name="Beckstrom-Sternberg S."/>
            <person name="Saqib M."/>
            <person name="Schutzer S.E."/>
            <person name="Keim P."/>
            <person name="Nierman W.C."/>
        </authorList>
    </citation>
    <scope>NUCLEOTIDE SEQUENCE [LARGE SCALE GENOMIC DNA]</scope>
    <source>
        <strain>1106a</strain>
    </source>
</reference>
<comment type="function">
    <text evidence="1">Catalyzes the transfer of the diacylglyceryl group from phosphatidylglycerol to the sulfhydryl group of the N-terminal cysteine of a prolipoprotein, the first step in the formation of mature lipoproteins.</text>
</comment>
<comment type="catalytic activity">
    <reaction evidence="1">
        <text>L-cysteinyl-[prolipoprotein] + a 1,2-diacyl-sn-glycero-3-phospho-(1'-sn-glycerol) = an S-1,2-diacyl-sn-glyceryl-L-cysteinyl-[prolipoprotein] + sn-glycerol 1-phosphate + H(+)</text>
        <dbReference type="Rhea" id="RHEA:56712"/>
        <dbReference type="Rhea" id="RHEA-COMP:14679"/>
        <dbReference type="Rhea" id="RHEA-COMP:14680"/>
        <dbReference type="ChEBI" id="CHEBI:15378"/>
        <dbReference type="ChEBI" id="CHEBI:29950"/>
        <dbReference type="ChEBI" id="CHEBI:57685"/>
        <dbReference type="ChEBI" id="CHEBI:64716"/>
        <dbReference type="ChEBI" id="CHEBI:140658"/>
        <dbReference type="EC" id="2.5.1.145"/>
    </reaction>
</comment>
<comment type="pathway">
    <text evidence="1">Protein modification; lipoprotein biosynthesis (diacylglyceryl transfer).</text>
</comment>
<comment type="subcellular location">
    <subcellularLocation>
        <location evidence="1">Cell inner membrane</location>
        <topology evidence="1">Multi-pass membrane protein</topology>
    </subcellularLocation>
</comment>
<comment type="similarity">
    <text evidence="1">Belongs to the Lgt family.</text>
</comment>
<organism>
    <name type="scientific">Burkholderia pseudomallei (strain 1106a)</name>
    <dbReference type="NCBI Taxonomy" id="357348"/>
    <lineage>
        <taxon>Bacteria</taxon>
        <taxon>Pseudomonadati</taxon>
        <taxon>Pseudomonadota</taxon>
        <taxon>Betaproteobacteria</taxon>
        <taxon>Burkholderiales</taxon>
        <taxon>Burkholderiaceae</taxon>
        <taxon>Burkholderia</taxon>
        <taxon>pseudomallei group</taxon>
    </lineage>
</organism>
<proteinExistence type="inferred from homology"/>
<name>LGT_BURP0</name>
<keyword id="KW-0997">Cell inner membrane</keyword>
<keyword id="KW-1003">Cell membrane</keyword>
<keyword id="KW-0472">Membrane</keyword>
<keyword id="KW-0808">Transferase</keyword>
<keyword id="KW-0812">Transmembrane</keyword>
<keyword id="KW-1133">Transmembrane helix</keyword>
<accession>A3NSI9</accession>
<protein>
    <recommendedName>
        <fullName evidence="1">Phosphatidylglycerol--prolipoprotein diacylglyceryl transferase</fullName>
        <ecNumber evidence="1">2.5.1.145</ecNumber>
    </recommendedName>
</protein>